<accession>Q54MA9</accession>
<sequence length="909" mass="102003">MSGTNSWLNNNNNNSNTTLTNTNTIGGTNFGINQFDGDDWDNIFDGNNGDGDGDLDGDSYKSYQNPYSYRDCIIFLIDASKAMFEPNENNEIPFHNAVKCLIQTITDKIITSDSDLIGVCFYNTNKKKNINDFENIYVLSDLDIPDPKIILTLEEMLENSNFTTNGLGNCQGEMPFCDALWTCSTMFSNIKQSGSSSGENSNNNNFKRIFLFTNEDNPNAYNDSIRNSSIQRSKDLSDLNIQIELFSMNKSVNDKFDFSLFYQHILIFADEENYLDPTQFDASSKFSDLRFKLKRKEFKKRSLGKLPLYIGNLNNNNNNSNSLDSQVIISTQLYNLFSHAHKSSPTLLDPKTNLPVKQLIKNVCANTQATLLPSQIKLCYHYGGEPVIFTKDEMQTIKSIDRIGFTLLGFKPLENIKPYHSIKHSQFIFPDDQSIKGSVLAFNALVEQMLKSGKAAICRFTPRSSSSPRMVALIPQEEILQSESEFNNQQLLNSLSSQQQQQQSSQQSSSSQQQQQQQQQQQQQQQQQQQQQLPSSSQQSNNNRKIQIRPRGMHVIYLPFADDIRYPNNIGVKSDGLEIKQENIDKAKNIIKMMKIKFDEKKFVNPGLQKHYASLQAIALERDKVEETVDNIQPDRKLIEKVIDTTQDFSDGIFPVGYASTVSSATSSTSSSSAKRLRDGKDLSTMDWPDMVKSGEIIKLTVDDLKSFLSNQNIKPSSKAKKADLIDLISNLISGGNFKPDKLHLLKKDSPPLSDNTITTNGGDDDDNNRPSKKVKSTSTSTTASKNTSSSSPPLVSAATMNKKAPPKKSFSVKDKNSSNNSSGGSSKANVNDEFDIDFKNSDQDDDTDNESDVNNKATTSTTTITTTTAAPKKNNFVNNGMFDTRELCKYGKNCYRTNKQHLDEYRHQ</sequence>
<protein>
    <recommendedName>
        <fullName>ATP-dependent DNA helicase ku70</fullName>
        <ecNumber>3.6.4.12</ecNumber>
    </recommendedName>
</protein>
<evidence type="ECO:0000250" key="1"/>
<evidence type="ECO:0000256" key="2">
    <source>
        <dbReference type="SAM" id="MobiDB-lite"/>
    </source>
</evidence>
<feature type="chain" id="PRO_0000376871" description="ATP-dependent DNA helicase ku70">
    <location>
        <begin position="1"/>
        <end position="909"/>
    </location>
</feature>
<feature type="domain" description="Ku">
    <location>
        <begin position="321"/>
        <end position="587"/>
    </location>
</feature>
<feature type="domain" description="SAP">
    <location>
        <begin position="697"/>
        <end position="733"/>
    </location>
</feature>
<feature type="region of interest" description="Disordered" evidence="2">
    <location>
        <begin position="494"/>
        <end position="548"/>
    </location>
</feature>
<feature type="region of interest" description="Disordered" evidence="2">
    <location>
        <begin position="663"/>
        <end position="685"/>
    </location>
</feature>
<feature type="region of interest" description="Disordered" evidence="2">
    <location>
        <begin position="744"/>
        <end position="859"/>
    </location>
</feature>
<feature type="compositionally biased region" description="Low complexity" evidence="2">
    <location>
        <begin position="494"/>
        <end position="543"/>
    </location>
</feature>
<feature type="compositionally biased region" description="Low complexity" evidence="2">
    <location>
        <begin position="663"/>
        <end position="674"/>
    </location>
</feature>
<feature type="compositionally biased region" description="Low complexity" evidence="2">
    <location>
        <begin position="777"/>
        <end position="800"/>
    </location>
</feature>
<feature type="compositionally biased region" description="Low complexity" evidence="2">
    <location>
        <begin position="818"/>
        <end position="832"/>
    </location>
</feature>
<proteinExistence type="inferred from homology"/>
<dbReference type="EC" id="3.6.4.12"/>
<dbReference type="EMBL" id="AAFI02000085">
    <property type="protein sequence ID" value="EAL64413.1"/>
    <property type="molecule type" value="Genomic_DNA"/>
</dbReference>
<dbReference type="RefSeq" id="XP_637925.1">
    <property type="nucleotide sequence ID" value="XM_632833.1"/>
</dbReference>
<dbReference type="SMR" id="Q54MA9"/>
<dbReference type="FunCoup" id="Q54MA9">
    <property type="interactions" value="1006"/>
</dbReference>
<dbReference type="STRING" id="44689.Q54MA9"/>
<dbReference type="PaxDb" id="44689-DDB0232001"/>
<dbReference type="EnsemblProtists" id="EAL64413">
    <property type="protein sequence ID" value="EAL64413"/>
    <property type="gene ID" value="DDB_G0286069"/>
</dbReference>
<dbReference type="GeneID" id="8625436"/>
<dbReference type="KEGG" id="ddi:DDB_G0286069"/>
<dbReference type="dictyBase" id="DDB_G0286069">
    <property type="gene designation" value="ku70"/>
</dbReference>
<dbReference type="VEuPathDB" id="AmoebaDB:DDB_G0286069"/>
<dbReference type="eggNOG" id="KOG2327">
    <property type="taxonomic scope" value="Eukaryota"/>
</dbReference>
<dbReference type="HOGENOM" id="CLU_014815_2_0_1"/>
<dbReference type="InParanoid" id="Q54MA9"/>
<dbReference type="OMA" id="FWANVKH"/>
<dbReference type="PhylomeDB" id="Q54MA9"/>
<dbReference type="Reactome" id="R-DDI-5693571">
    <property type="pathway name" value="Nonhomologous End-Joining (NHEJ)"/>
</dbReference>
<dbReference type="Reactome" id="R-DDI-6798695">
    <property type="pathway name" value="Neutrophil degranulation"/>
</dbReference>
<dbReference type="PRO" id="PR:Q54MA9"/>
<dbReference type="Proteomes" id="UP000002195">
    <property type="component" value="Chromosome 4"/>
</dbReference>
<dbReference type="GO" id="GO:0000785">
    <property type="term" value="C:chromatin"/>
    <property type="evidence" value="ECO:0000305"/>
    <property type="project" value="dictyBase"/>
</dbReference>
<dbReference type="GO" id="GO:0043564">
    <property type="term" value="C:Ku70:Ku80 complex"/>
    <property type="evidence" value="ECO:0000314"/>
    <property type="project" value="dictyBase"/>
</dbReference>
<dbReference type="GO" id="GO:0005634">
    <property type="term" value="C:nucleus"/>
    <property type="evidence" value="ECO:0000250"/>
    <property type="project" value="dictyBase"/>
</dbReference>
<dbReference type="GO" id="GO:0005524">
    <property type="term" value="F:ATP binding"/>
    <property type="evidence" value="ECO:0007669"/>
    <property type="project" value="UniProtKB-KW"/>
</dbReference>
<dbReference type="GO" id="GO:0016887">
    <property type="term" value="F:ATP hydrolysis activity"/>
    <property type="evidence" value="ECO:0007669"/>
    <property type="project" value="RHEA"/>
</dbReference>
<dbReference type="GO" id="GO:0003684">
    <property type="term" value="F:damaged DNA binding"/>
    <property type="evidence" value="ECO:0007669"/>
    <property type="project" value="InterPro"/>
</dbReference>
<dbReference type="GO" id="GO:0003678">
    <property type="term" value="F:DNA helicase activity"/>
    <property type="evidence" value="ECO:0007669"/>
    <property type="project" value="InterPro"/>
</dbReference>
<dbReference type="GO" id="GO:0003690">
    <property type="term" value="F:double-stranded DNA binding"/>
    <property type="evidence" value="ECO:0000250"/>
    <property type="project" value="dictyBase"/>
</dbReference>
<dbReference type="GO" id="GO:0042162">
    <property type="term" value="F:telomeric DNA binding"/>
    <property type="evidence" value="ECO:0000318"/>
    <property type="project" value="GO_Central"/>
</dbReference>
<dbReference type="GO" id="GO:0006310">
    <property type="term" value="P:DNA recombination"/>
    <property type="evidence" value="ECO:0007669"/>
    <property type="project" value="UniProtKB-KW"/>
</dbReference>
<dbReference type="GO" id="GO:0006302">
    <property type="term" value="P:double-strand break repair"/>
    <property type="evidence" value="ECO:0000315"/>
    <property type="project" value="dictyBase"/>
</dbReference>
<dbReference type="GO" id="GO:0006303">
    <property type="term" value="P:double-strand break repair via nonhomologous end joining"/>
    <property type="evidence" value="ECO:0000318"/>
    <property type="project" value="GO_Central"/>
</dbReference>
<dbReference type="GO" id="GO:0045893">
    <property type="term" value="P:positive regulation of DNA-templated transcription"/>
    <property type="evidence" value="ECO:0000250"/>
    <property type="project" value="dictyBase"/>
</dbReference>
<dbReference type="GO" id="GO:0000723">
    <property type="term" value="P:telomere maintenance"/>
    <property type="evidence" value="ECO:0000318"/>
    <property type="project" value="GO_Central"/>
</dbReference>
<dbReference type="CDD" id="cd00788">
    <property type="entry name" value="KU70"/>
    <property type="match status" value="1"/>
</dbReference>
<dbReference type="CDD" id="cd01458">
    <property type="entry name" value="vWA_ku"/>
    <property type="match status" value="1"/>
</dbReference>
<dbReference type="FunFam" id="3.40.50.410:FF:000080">
    <property type="entry name" value="X-ray repair-complementing defective repair in Chinese hamster cells 6"/>
    <property type="match status" value="1"/>
</dbReference>
<dbReference type="Gene3D" id="1.10.1600.10">
    <property type="match status" value="1"/>
</dbReference>
<dbReference type="Gene3D" id="2.40.290.10">
    <property type="match status" value="1"/>
</dbReference>
<dbReference type="Gene3D" id="4.10.970.10">
    <property type="entry name" value="Ku70, bridge and pillars"/>
    <property type="match status" value="1"/>
</dbReference>
<dbReference type="Gene3D" id="1.10.720.30">
    <property type="entry name" value="SAP domain"/>
    <property type="match status" value="1"/>
</dbReference>
<dbReference type="Gene3D" id="3.40.50.410">
    <property type="entry name" value="von Willebrand factor, type A domain"/>
    <property type="match status" value="1"/>
</dbReference>
<dbReference type="InterPro" id="IPR019406">
    <property type="entry name" value="APLF_PBZ"/>
</dbReference>
<dbReference type="InterPro" id="IPR006165">
    <property type="entry name" value="Ku70"/>
</dbReference>
<dbReference type="InterPro" id="IPR006164">
    <property type="entry name" value="Ku70/Ku80_beta-barrel_dom"/>
</dbReference>
<dbReference type="InterPro" id="IPR027388">
    <property type="entry name" value="Ku70_bridge/pillars_dom_sf"/>
</dbReference>
<dbReference type="InterPro" id="IPR047087">
    <property type="entry name" value="KU70_core_dom"/>
</dbReference>
<dbReference type="InterPro" id="IPR005160">
    <property type="entry name" value="Ku_C"/>
</dbReference>
<dbReference type="InterPro" id="IPR005161">
    <property type="entry name" value="Ku_N"/>
</dbReference>
<dbReference type="InterPro" id="IPR036361">
    <property type="entry name" value="SAP_dom_sf"/>
</dbReference>
<dbReference type="InterPro" id="IPR016194">
    <property type="entry name" value="SPOC-like_C_dom_sf"/>
</dbReference>
<dbReference type="InterPro" id="IPR036465">
    <property type="entry name" value="vWFA_dom_sf"/>
</dbReference>
<dbReference type="NCBIfam" id="TIGR00578">
    <property type="entry name" value="ku70"/>
    <property type="match status" value="1"/>
</dbReference>
<dbReference type="PANTHER" id="PTHR12604">
    <property type="entry name" value="KU AUTOANTIGEN DNA HELICASE"/>
    <property type="match status" value="1"/>
</dbReference>
<dbReference type="PANTHER" id="PTHR12604:SF2">
    <property type="entry name" value="X-RAY REPAIR CROSS-COMPLEMENTING PROTEIN 6"/>
    <property type="match status" value="1"/>
</dbReference>
<dbReference type="Pfam" id="PF02735">
    <property type="entry name" value="Ku"/>
    <property type="match status" value="1"/>
</dbReference>
<dbReference type="Pfam" id="PF03730">
    <property type="entry name" value="Ku_C"/>
    <property type="match status" value="1"/>
</dbReference>
<dbReference type="Pfam" id="PF03731">
    <property type="entry name" value="Ku_N"/>
    <property type="match status" value="1"/>
</dbReference>
<dbReference type="Pfam" id="PF10283">
    <property type="entry name" value="zf-CCHH"/>
    <property type="match status" value="1"/>
</dbReference>
<dbReference type="SMART" id="SM00559">
    <property type="entry name" value="Ku78"/>
    <property type="match status" value="1"/>
</dbReference>
<dbReference type="SUPFAM" id="SSF100939">
    <property type="entry name" value="SPOC domain-like"/>
    <property type="match status" value="1"/>
</dbReference>
<dbReference type="SUPFAM" id="SSF53300">
    <property type="entry name" value="vWA-like"/>
    <property type="match status" value="1"/>
</dbReference>
<reference key="1">
    <citation type="journal article" date="2005" name="Nature">
        <title>The genome of the social amoeba Dictyostelium discoideum.</title>
        <authorList>
            <person name="Eichinger L."/>
            <person name="Pachebat J.A."/>
            <person name="Gloeckner G."/>
            <person name="Rajandream M.A."/>
            <person name="Sucgang R."/>
            <person name="Berriman M."/>
            <person name="Song J."/>
            <person name="Olsen R."/>
            <person name="Szafranski K."/>
            <person name="Xu Q."/>
            <person name="Tunggal B."/>
            <person name="Kummerfeld S."/>
            <person name="Madera M."/>
            <person name="Konfortov B.A."/>
            <person name="Rivero F."/>
            <person name="Bankier A.T."/>
            <person name="Lehmann R."/>
            <person name="Hamlin N."/>
            <person name="Davies R."/>
            <person name="Gaudet P."/>
            <person name="Fey P."/>
            <person name="Pilcher K."/>
            <person name="Chen G."/>
            <person name="Saunders D."/>
            <person name="Sodergren E.J."/>
            <person name="Davis P."/>
            <person name="Kerhornou A."/>
            <person name="Nie X."/>
            <person name="Hall N."/>
            <person name="Anjard C."/>
            <person name="Hemphill L."/>
            <person name="Bason N."/>
            <person name="Farbrother P."/>
            <person name="Desany B."/>
            <person name="Just E."/>
            <person name="Morio T."/>
            <person name="Rost R."/>
            <person name="Churcher C.M."/>
            <person name="Cooper J."/>
            <person name="Haydock S."/>
            <person name="van Driessche N."/>
            <person name="Cronin A."/>
            <person name="Goodhead I."/>
            <person name="Muzny D.M."/>
            <person name="Mourier T."/>
            <person name="Pain A."/>
            <person name="Lu M."/>
            <person name="Harper D."/>
            <person name="Lindsay R."/>
            <person name="Hauser H."/>
            <person name="James K.D."/>
            <person name="Quiles M."/>
            <person name="Madan Babu M."/>
            <person name="Saito T."/>
            <person name="Buchrieser C."/>
            <person name="Wardroper A."/>
            <person name="Felder M."/>
            <person name="Thangavelu M."/>
            <person name="Johnson D."/>
            <person name="Knights A."/>
            <person name="Loulseged H."/>
            <person name="Mungall K.L."/>
            <person name="Oliver K."/>
            <person name="Price C."/>
            <person name="Quail M.A."/>
            <person name="Urushihara H."/>
            <person name="Hernandez J."/>
            <person name="Rabbinowitsch E."/>
            <person name="Steffen D."/>
            <person name="Sanders M."/>
            <person name="Ma J."/>
            <person name="Kohara Y."/>
            <person name="Sharp S."/>
            <person name="Simmonds M.N."/>
            <person name="Spiegler S."/>
            <person name="Tivey A."/>
            <person name="Sugano S."/>
            <person name="White B."/>
            <person name="Walker D."/>
            <person name="Woodward J.R."/>
            <person name="Winckler T."/>
            <person name="Tanaka Y."/>
            <person name="Shaulsky G."/>
            <person name="Schleicher M."/>
            <person name="Weinstock G.M."/>
            <person name="Rosenthal A."/>
            <person name="Cox E.C."/>
            <person name="Chisholm R.L."/>
            <person name="Gibbs R.A."/>
            <person name="Loomis W.F."/>
            <person name="Platzer M."/>
            <person name="Kay R.R."/>
            <person name="Williams J.G."/>
            <person name="Dear P.H."/>
            <person name="Noegel A.A."/>
            <person name="Barrell B.G."/>
            <person name="Kuspa A."/>
        </authorList>
    </citation>
    <scope>NUCLEOTIDE SEQUENCE [LARGE SCALE GENOMIC DNA]</scope>
    <source>
        <strain>AX4</strain>
    </source>
</reference>
<gene>
    <name type="primary">ku70</name>
    <name type="ORF">DDB_G0286069</name>
</gene>
<name>KU70_DICDI</name>
<keyword id="KW-0067">ATP-binding</keyword>
<keyword id="KW-0227">DNA damage</keyword>
<keyword id="KW-0233">DNA recombination</keyword>
<keyword id="KW-0234">DNA repair</keyword>
<keyword id="KW-0238">DNA-binding</keyword>
<keyword id="KW-0347">Helicase</keyword>
<keyword id="KW-0378">Hydrolase</keyword>
<keyword id="KW-0547">Nucleotide-binding</keyword>
<keyword id="KW-0539">Nucleus</keyword>
<keyword id="KW-1185">Reference proteome</keyword>
<organism>
    <name type="scientific">Dictyostelium discoideum</name>
    <name type="common">Social amoeba</name>
    <dbReference type="NCBI Taxonomy" id="44689"/>
    <lineage>
        <taxon>Eukaryota</taxon>
        <taxon>Amoebozoa</taxon>
        <taxon>Evosea</taxon>
        <taxon>Eumycetozoa</taxon>
        <taxon>Dictyostelia</taxon>
        <taxon>Dictyosteliales</taxon>
        <taxon>Dictyosteliaceae</taxon>
        <taxon>Dictyostelium</taxon>
    </lineage>
</organism>
<comment type="function">
    <text evidence="1">Involved in non-homologous end joining (NHEJ) DNA double strand break repair.</text>
</comment>
<comment type="catalytic activity">
    <reaction>
        <text>ATP + H2O = ADP + phosphate + H(+)</text>
        <dbReference type="Rhea" id="RHEA:13065"/>
        <dbReference type="ChEBI" id="CHEBI:15377"/>
        <dbReference type="ChEBI" id="CHEBI:15378"/>
        <dbReference type="ChEBI" id="CHEBI:30616"/>
        <dbReference type="ChEBI" id="CHEBI:43474"/>
        <dbReference type="ChEBI" id="CHEBI:456216"/>
        <dbReference type="EC" id="3.6.4.12"/>
    </reaction>
</comment>
<comment type="subunit">
    <text evidence="1">Heterodimer of ku70 and ku80.</text>
</comment>
<comment type="subcellular location">
    <subcellularLocation>
        <location evidence="1">Nucleus</location>
    </subcellularLocation>
</comment>